<reference key="1">
    <citation type="journal article" date="2000" name="Nucleic Acids Res.">
        <title>Complete genome sequence of the alkaliphilic bacterium Bacillus halodurans and genomic sequence comparison with Bacillus subtilis.</title>
        <authorList>
            <person name="Takami H."/>
            <person name="Nakasone K."/>
            <person name="Takaki Y."/>
            <person name="Maeno G."/>
            <person name="Sasaki R."/>
            <person name="Masui N."/>
            <person name="Fuji F."/>
            <person name="Hirama C."/>
            <person name="Nakamura Y."/>
            <person name="Ogasawara N."/>
            <person name="Kuhara S."/>
            <person name="Horikoshi K."/>
        </authorList>
    </citation>
    <scope>NUCLEOTIDE SEQUENCE [LARGE SCALE GENOMIC DNA]</scope>
    <source>
        <strain>ATCC BAA-125 / DSM 18197 / FERM 7344 / JCM 9153 / C-125</strain>
    </source>
</reference>
<accession>Q9KGL3</accession>
<keyword id="KW-0002">3D-structure</keyword>
<keyword id="KW-1185">Reference proteome</keyword>
<dbReference type="EMBL" id="BA000004">
    <property type="protein sequence ID" value="BAB03767.1"/>
    <property type="molecule type" value="Genomic_DNA"/>
</dbReference>
<dbReference type="PIR" id="H83655">
    <property type="entry name" value="H83655"/>
</dbReference>
<dbReference type="RefSeq" id="WP_010896232.1">
    <property type="nucleotide sequence ID" value="NC_002570.2"/>
</dbReference>
<dbReference type="PDB" id="1ZG2">
    <property type="method" value="NMR"/>
    <property type="chains" value="A=1-94"/>
</dbReference>
<dbReference type="PDBsum" id="1ZG2"/>
<dbReference type="BMRB" id="Q9KGL3"/>
<dbReference type="SMR" id="Q9KGL3"/>
<dbReference type="STRING" id="272558.gene:10725870"/>
<dbReference type="GeneID" id="87595571"/>
<dbReference type="KEGG" id="bha:BH0048"/>
<dbReference type="eggNOG" id="COG2827">
    <property type="taxonomic scope" value="Bacteria"/>
</dbReference>
<dbReference type="HOGENOM" id="CLU_135650_0_3_9"/>
<dbReference type="OrthoDB" id="9807770at2"/>
<dbReference type="EvolutionaryTrace" id="Q9KGL3"/>
<dbReference type="Proteomes" id="UP000001258">
    <property type="component" value="Chromosome"/>
</dbReference>
<dbReference type="CDD" id="cd10456">
    <property type="entry name" value="GIY-YIG_UPF0213"/>
    <property type="match status" value="1"/>
</dbReference>
<dbReference type="Gene3D" id="3.40.1440.10">
    <property type="entry name" value="GIY-YIG endonuclease"/>
    <property type="match status" value="1"/>
</dbReference>
<dbReference type="InterPro" id="IPR000305">
    <property type="entry name" value="GIY-YIG_endonuc"/>
</dbReference>
<dbReference type="InterPro" id="IPR035901">
    <property type="entry name" value="GIY-YIG_endonuc_sf"/>
</dbReference>
<dbReference type="InterPro" id="IPR050190">
    <property type="entry name" value="UPF0213_domain"/>
</dbReference>
<dbReference type="PANTHER" id="PTHR34477">
    <property type="entry name" value="UPF0213 PROTEIN YHBQ"/>
    <property type="match status" value="1"/>
</dbReference>
<dbReference type="PANTHER" id="PTHR34477:SF1">
    <property type="entry name" value="UPF0213 PROTEIN YHBQ"/>
    <property type="match status" value="1"/>
</dbReference>
<dbReference type="Pfam" id="PF01541">
    <property type="entry name" value="GIY-YIG"/>
    <property type="match status" value="1"/>
</dbReference>
<dbReference type="SUPFAM" id="SSF82771">
    <property type="entry name" value="GIY-YIG endonuclease"/>
    <property type="match status" value="1"/>
</dbReference>
<dbReference type="PROSITE" id="PS50164">
    <property type="entry name" value="GIY_YIG"/>
    <property type="match status" value="1"/>
</dbReference>
<protein>
    <recommendedName>
        <fullName>UPF0213 protein BH0048</fullName>
    </recommendedName>
</protein>
<comment type="similarity">
    <text evidence="2">Belongs to the UPF0213 family.</text>
</comment>
<evidence type="ECO:0000255" key="1">
    <source>
        <dbReference type="PROSITE-ProRule" id="PRU00977"/>
    </source>
</evidence>
<evidence type="ECO:0000305" key="2"/>
<evidence type="ECO:0007829" key="3">
    <source>
        <dbReference type="PDB" id="1ZG2"/>
    </source>
</evidence>
<gene>
    <name type="ordered locus">BH0048</name>
</gene>
<proteinExistence type="evidence at protein level"/>
<feature type="chain" id="PRO_0000161352" description="UPF0213 protein BH0048">
    <location>
        <begin position="1"/>
        <end position="94"/>
    </location>
</feature>
<feature type="domain" description="GIY-YIG" evidence="1">
    <location>
        <begin position="1"/>
        <end position="76"/>
    </location>
</feature>
<feature type="strand" evidence="3">
    <location>
        <begin position="3"/>
        <end position="9"/>
    </location>
</feature>
<feature type="strand" evidence="3">
    <location>
        <begin position="15"/>
        <end position="20"/>
    </location>
</feature>
<feature type="helix" evidence="3">
    <location>
        <begin position="23"/>
        <end position="33"/>
    </location>
</feature>
<feature type="strand" evidence="3">
    <location>
        <begin position="46"/>
        <end position="54"/>
    </location>
</feature>
<feature type="helix" evidence="3">
    <location>
        <begin position="56"/>
        <end position="68"/>
    </location>
</feature>
<feature type="helix" evidence="3">
    <location>
        <begin position="71"/>
        <end position="80"/>
    </location>
</feature>
<feature type="helix" evidence="3">
    <location>
        <begin position="84"/>
        <end position="87"/>
    </location>
</feature>
<name>Y048_HALH5</name>
<organism>
    <name type="scientific">Halalkalibacterium halodurans (strain ATCC BAA-125 / DSM 18197 / FERM 7344 / JCM 9153 / C-125)</name>
    <name type="common">Bacillus halodurans</name>
    <dbReference type="NCBI Taxonomy" id="272558"/>
    <lineage>
        <taxon>Bacteria</taxon>
        <taxon>Bacillati</taxon>
        <taxon>Bacillota</taxon>
        <taxon>Bacilli</taxon>
        <taxon>Bacillales</taxon>
        <taxon>Bacillaceae</taxon>
        <taxon>Halalkalibacterium (ex Joshi et al. 2022)</taxon>
    </lineage>
</organism>
<sequence>MNHYVYILECKDGSWYTGYTTDVDRRIKKHASGKGAKYTRGRGPFRLVATWAFPSKEEAMRWEYEVKHLSRRKKEQLVSLKGGPYENTTKLSTT</sequence>